<organism>
    <name type="scientific">Haemophilus influenzae (strain ATCC 51907 / DSM 11121 / KW20 / Rd)</name>
    <dbReference type="NCBI Taxonomy" id="71421"/>
    <lineage>
        <taxon>Bacteria</taxon>
        <taxon>Pseudomonadati</taxon>
        <taxon>Pseudomonadota</taxon>
        <taxon>Gammaproteobacteria</taxon>
        <taxon>Pasteurellales</taxon>
        <taxon>Pasteurellaceae</taxon>
        <taxon>Haemophilus</taxon>
    </lineage>
</organism>
<sequence>MNIRDLEYLVALSEYKHFRRAADSCNVSQPTLSGQIRKLEDELGIILLERTSRKVLFTQSGMLLVDQARTVLREVKLLKEMASNQGKEMTGPLHIGLIPTVGPYLLPYIVPMLKAAFPDLEVFLYEAQTHQLLEQLETGRLDCAIVATVPETEAFIEVPIFNEKMLLAVSEHHPWAQESKLPMNQLNGQEMLMLDDGHCLRNQALDYCFTAGAKENSHFQATSLETLRNMVAANAGITFMPELAVLNEGTRKGVKYIPCYSPEPSRTIALVYRPGSPLRNRYERVASAVSDEVKSILDGLK</sequence>
<keyword id="KW-0010">Activator</keyword>
<keyword id="KW-0238">DNA-binding</keyword>
<keyword id="KW-1185">Reference proteome</keyword>
<keyword id="KW-0804">Transcription</keyword>
<keyword id="KW-0805">Transcription regulation</keyword>
<protein>
    <recommendedName>
        <fullName>Hydrogen peroxide-inducible genes activator</fullName>
    </recommendedName>
</protein>
<gene>
    <name type="primary">oxyR</name>
    <name type="ordered locus">HI_0571</name>
</gene>
<name>OXYR_HAEIN</name>
<accession>P44418</accession>
<dbReference type="EMBL" id="L42023">
    <property type="protein sequence ID" value="AAC22229.1"/>
    <property type="molecule type" value="Genomic_DNA"/>
</dbReference>
<dbReference type="EMBL" id="U49355">
    <property type="protein sequence ID" value="AAB48948.1"/>
    <property type="molecule type" value="Genomic_DNA"/>
</dbReference>
<dbReference type="PIR" id="C64078">
    <property type="entry name" value="C64078"/>
</dbReference>
<dbReference type="RefSeq" id="NP_438728.1">
    <property type="nucleotide sequence ID" value="NC_000907.1"/>
</dbReference>
<dbReference type="SMR" id="P44418"/>
<dbReference type="STRING" id="71421.HI_0571"/>
<dbReference type="EnsemblBacteria" id="AAC22229">
    <property type="protein sequence ID" value="AAC22229"/>
    <property type="gene ID" value="HI_0571"/>
</dbReference>
<dbReference type="KEGG" id="hin:HI_0571"/>
<dbReference type="PATRIC" id="fig|71421.8.peg.591"/>
<dbReference type="eggNOG" id="COG0583">
    <property type="taxonomic scope" value="Bacteria"/>
</dbReference>
<dbReference type="HOGENOM" id="CLU_039613_6_4_6"/>
<dbReference type="OrthoDB" id="9775392at2"/>
<dbReference type="PhylomeDB" id="P44418"/>
<dbReference type="BioCyc" id="HINF71421:G1GJ1-583-MONOMER"/>
<dbReference type="Proteomes" id="UP000000579">
    <property type="component" value="Chromosome"/>
</dbReference>
<dbReference type="GO" id="GO:0032993">
    <property type="term" value="C:protein-DNA complex"/>
    <property type="evidence" value="ECO:0000318"/>
    <property type="project" value="GO_Central"/>
</dbReference>
<dbReference type="GO" id="GO:0003677">
    <property type="term" value="F:DNA binding"/>
    <property type="evidence" value="ECO:0007669"/>
    <property type="project" value="UniProtKB-KW"/>
</dbReference>
<dbReference type="GO" id="GO:0003700">
    <property type="term" value="F:DNA-binding transcription factor activity"/>
    <property type="evidence" value="ECO:0000318"/>
    <property type="project" value="GO_Central"/>
</dbReference>
<dbReference type="GO" id="GO:0006355">
    <property type="term" value="P:regulation of DNA-templated transcription"/>
    <property type="evidence" value="ECO:0000318"/>
    <property type="project" value="GO_Central"/>
</dbReference>
<dbReference type="CDD" id="cd08411">
    <property type="entry name" value="PBP2_OxyR"/>
    <property type="match status" value="1"/>
</dbReference>
<dbReference type="FunFam" id="3.40.190.10:FF:000027">
    <property type="entry name" value="DNA-binding transcriptional regulator OxyR"/>
    <property type="match status" value="1"/>
</dbReference>
<dbReference type="FunFam" id="1.10.10.10:FF:000001">
    <property type="entry name" value="LysR family transcriptional regulator"/>
    <property type="match status" value="1"/>
</dbReference>
<dbReference type="Gene3D" id="3.40.190.10">
    <property type="entry name" value="Periplasmic binding protein-like II"/>
    <property type="match status" value="2"/>
</dbReference>
<dbReference type="Gene3D" id="1.10.10.10">
    <property type="entry name" value="Winged helix-like DNA-binding domain superfamily/Winged helix DNA-binding domain"/>
    <property type="match status" value="1"/>
</dbReference>
<dbReference type="InterPro" id="IPR005119">
    <property type="entry name" value="LysR_subst-bd"/>
</dbReference>
<dbReference type="InterPro" id="IPR000847">
    <property type="entry name" value="Tscrpt_reg_HTH_LysR"/>
</dbReference>
<dbReference type="InterPro" id="IPR036388">
    <property type="entry name" value="WH-like_DNA-bd_sf"/>
</dbReference>
<dbReference type="InterPro" id="IPR036390">
    <property type="entry name" value="WH_DNA-bd_sf"/>
</dbReference>
<dbReference type="NCBIfam" id="NF008361">
    <property type="entry name" value="PRK11151.1"/>
    <property type="match status" value="1"/>
</dbReference>
<dbReference type="PANTHER" id="PTHR30346:SF26">
    <property type="entry name" value="HYDROGEN PEROXIDE-INDUCIBLE GENES ACTIVATOR"/>
    <property type="match status" value="1"/>
</dbReference>
<dbReference type="PANTHER" id="PTHR30346">
    <property type="entry name" value="TRANSCRIPTIONAL DUAL REGULATOR HCAR-RELATED"/>
    <property type="match status" value="1"/>
</dbReference>
<dbReference type="Pfam" id="PF00126">
    <property type="entry name" value="HTH_1"/>
    <property type="match status" value="1"/>
</dbReference>
<dbReference type="Pfam" id="PF03466">
    <property type="entry name" value="LysR_substrate"/>
    <property type="match status" value="1"/>
</dbReference>
<dbReference type="PRINTS" id="PR00039">
    <property type="entry name" value="HTHLYSR"/>
</dbReference>
<dbReference type="SUPFAM" id="SSF53850">
    <property type="entry name" value="Periplasmic binding protein-like II"/>
    <property type="match status" value="1"/>
</dbReference>
<dbReference type="SUPFAM" id="SSF46785">
    <property type="entry name" value="Winged helix' DNA-binding domain"/>
    <property type="match status" value="1"/>
</dbReference>
<dbReference type="PROSITE" id="PS50931">
    <property type="entry name" value="HTH_LYSR"/>
    <property type="match status" value="1"/>
</dbReference>
<comment type="function">
    <text evidence="1">Required for the induction of a regulon of hydrogen peroxide inducible genes such as catalase and glutathione-reductase.</text>
</comment>
<comment type="similarity">
    <text evidence="3">Belongs to the LysR transcriptional regulatory family.</text>
</comment>
<feature type="chain" id="PRO_0000105733" description="Hydrogen peroxide-inducible genes activator">
    <location>
        <begin position="1"/>
        <end position="301"/>
    </location>
</feature>
<feature type="domain" description="HTH lysR-type" evidence="2">
    <location>
        <begin position="1"/>
        <end position="58"/>
    </location>
</feature>
<feature type="DNA-binding region" description="H-T-H motif" evidence="2">
    <location>
        <begin position="18"/>
        <end position="37"/>
    </location>
</feature>
<reference key="1">
    <citation type="journal article" date="1995" name="Science">
        <title>Whole-genome random sequencing and assembly of Haemophilus influenzae Rd.</title>
        <authorList>
            <person name="Fleischmann R.D."/>
            <person name="Adams M.D."/>
            <person name="White O."/>
            <person name="Clayton R.A."/>
            <person name="Kirkness E.F."/>
            <person name="Kerlavage A.R."/>
            <person name="Bult C.J."/>
            <person name="Tomb J.-F."/>
            <person name="Dougherty B.A."/>
            <person name="Merrick J.M."/>
            <person name="McKenney K."/>
            <person name="Sutton G.G."/>
            <person name="FitzHugh W."/>
            <person name="Fields C.A."/>
            <person name="Gocayne J.D."/>
            <person name="Scott J.D."/>
            <person name="Shirley R."/>
            <person name="Liu L.-I."/>
            <person name="Glodek A."/>
            <person name="Kelley J.M."/>
            <person name="Weidman J.F."/>
            <person name="Phillips C.A."/>
            <person name="Spriggs T."/>
            <person name="Hedblom E."/>
            <person name="Cotton M.D."/>
            <person name="Utterback T.R."/>
            <person name="Hanna M.C."/>
            <person name="Nguyen D.T."/>
            <person name="Saudek D.M."/>
            <person name="Brandon R.C."/>
            <person name="Fine L.D."/>
            <person name="Fritchman J.L."/>
            <person name="Fuhrmann J.L."/>
            <person name="Geoghagen N.S.M."/>
            <person name="Gnehm C.L."/>
            <person name="McDonald L.A."/>
            <person name="Small K.V."/>
            <person name="Fraser C.M."/>
            <person name="Smith H.O."/>
            <person name="Venter J.C."/>
        </authorList>
    </citation>
    <scope>NUCLEOTIDE SEQUENCE [LARGE SCALE GENOMIC DNA]</scope>
    <source>
        <strain>ATCC 51907 / DSM 11121 / KW20 / Rd</strain>
    </source>
</reference>
<reference key="2">
    <citation type="journal article" date="1996" name="Infect. Immun.">
        <title>Lack of expression of the global regulator OxyR in Haemophilus influenzae has a profound effect on growth phenotype.</title>
        <authorList>
            <person name="Maciver I."/>
            <person name="Hansen E.J."/>
        </authorList>
    </citation>
    <scope>NUCLEOTIDE SEQUENCE [GENOMIC DNA]</scope>
    <source>
        <strain>NTHi TN106</strain>
    </source>
</reference>
<evidence type="ECO:0000250" key="1"/>
<evidence type="ECO:0000255" key="2">
    <source>
        <dbReference type="PROSITE-ProRule" id="PRU00253"/>
    </source>
</evidence>
<evidence type="ECO:0000305" key="3"/>
<proteinExistence type="inferred from homology"/>